<accession>Q5PC58</accession>
<organism>
    <name type="scientific">Salmonella paratyphi A (strain ATCC 9150 / SARB42)</name>
    <dbReference type="NCBI Taxonomy" id="295319"/>
    <lineage>
        <taxon>Bacteria</taxon>
        <taxon>Pseudomonadati</taxon>
        <taxon>Pseudomonadota</taxon>
        <taxon>Gammaproteobacteria</taxon>
        <taxon>Enterobacterales</taxon>
        <taxon>Enterobacteriaceae</taxon>
        <taxon>Salmonella</taxon>
    </lineage>
</organism>
<protein>
    <recommendedName>
        <fullName evidence="1">Purine ribonucleoside efflux pump NepI</fullName>
    </recommendedName>
</protein>
<keyword id="KW-0050">Antiport</keyword>
<keyword id="KW-0997">Cell inner membrane</keyword>
<keyword id="KW-1003">Cell membrane</keyword>
<keyword id="KW-0472">Membrane</keyword>
<keyword id="KW-0812">Transmembrane</keyword>
<keyword id="KW-1133">Transmembrane helix</keyword>
<keyword id="KW-0813">Transport</keyword>
<comment type="function">
    <text evidence="1">Involved in the efflux of purine ribonucleosides, such as inosine and guanosine.</text>
</comment>
<comment type="catalytic activity">
    <reaction evidence="1">
        <text>inosine(in) + H(+)(out) = inosine(out) + H(+)(in)</text>
        <dbReference type="Rhea" id="RHEA:29211"/>
        <dbReference type="ChEBI" id="CHEBI:15378"/>
        <dbReference type="ChEBI" id="CHEBI:17596"/>
    </reaction>
    <physiologicalReaction direction="left-to-right" evidence="1">
        <dbReference type="Rhea" id="RHEA:29212"/>
    </physiologicalReaction>
</comment>
<comment type="catalytic activity">
    <reaction evidence="1">
        <text>guanosine(in) + H(+)(out) = guanosine(out) + H(+)(in)</text>
        <dbReference type="Rhea" id="RHEA:29583"/>
        <dbReference type="ChEBI" id="CHEBI:15378"/>
        <dbReference type="ChEBI" id="CHEBI:16750"/>
    </reaction>
    <physiologicalReaction direction="left-to-right" evidence="1">
        <dbReference type="Rhea" id="RHEA:29584"/>
    </physiologicalReaction>
</comment>
<comment type="subcellular location">
    <subcellularLocation>
        <location evidence="1">Cell inner membrane</location>
        <topology evidence="1">Multi-pass membrane protein</topology>
    </subcellularLocation>
</comment>
<comment type="similarity">
    <text evidence="1">Belongs to the major facilitator superfamily. DHA1 family. NepI (TC 2.A.1.2.26) subfamily.</text>
</comment>
<feature type="chain" id="PRO_0000294114" description="Purine ribonucleoside efflux pump NepI">
    <location>
        <begin position="1"/>
        <end position="397"/>
    </location>
</feature>
<feature type="topological domain" description="Cytoplasmic" evidence="1">
    <location>
        <begin position="1"/>
        <end position="21"/>
    </location>
</feature>
<feature type="transmembrane region" description="Helical" evidence="1">
    <location>
        <begin position="22"/>
        <end position="42"/>
    </location>
</feature>
<feature type="topological domain" description="Periplasmic" evidence="1">
    <location>
        <begin position="43"/>
        <end position="54"/>
    </location>
</feature>
<feature type="transmembrane region" description="Helical" evidence="1">
    <location>
        <begin position="55"/>
        <end position="75"/>
    </location>
</feature>
<feature type="topological domain" description="Cytoplasmic" evidence="1">
    <location>
        <begin position="76"/>
        <end position="85"/>
    </location>
</feature>
<feature type="transmembrane region" description="Helical" evidence="1">
    <location>
        <begin position="86"/>
        <end position="106"/>
    </location>
</feature>
<feature type="topological domain" description="Periplasmic" evidence="1">
    <location>
        <position position="107"/>
    </location>
</feature>
<feature type="transmembrane region" description="Helical" evidence="1">
    <location>
        <begin position="108"/>
        <end position="128"/>
    </location>
</feature>
<feature type="topological domain" description="Cytoplasmic" evidence="1">
    <location>
        <begin position="129"/>
        <end position="147"/>
    </location>
</feature>
<feature type="transmembrane region" description="Helical" evidence="1">
    <location>
        <begin position="148"/>
        <end position="168"/>
    </location>
</feature>
<feature type="topological domain" description="Periplasmic" evidence="1">
    <location>
        <begin position="169"/>
        <end position="175"/>
    </location>
</feature>
<feature type="transmembrane region" description="Helical" evidence="1">
    <location>
        <begin position="176"/>
        <end position="196"/>
    </location>
</feature>
<feature type="topological domain" description="Cytoplasmic" evidence="1">
    <location>
        <begin position="197"/>
        <end position="215"/>
    </location>
</feature>
<feature type="transmembrane region" description="Helical" evidence="1">
    <location>
        <begin position="216"/>
        <end position="236"/>
    </location>
</feature>
<feature type="topological domain" description="Periplasmic" evidence="1">
    <location>
        <begin position="237"/>
        <end position="255"/>
    </location>
</feature>
<feature type="transmembrane region" description="Helical" evidence="1">
    <location>
        <begin position="256"/>
        <end position="276"/>
    </location>
</feature>
<feature type="topological domain" description="Cytoplasmic" evidence="1">
    <location>
        <begin position="277"/>
        <end position="281"/>
    </location>
</feature>
<feature type="transmembrane region" description="Helical" evidence="1">
    <location>
        <begin position="282"/>
        <end position="302"/>
    </location>
</feature>
<feature type="topological domain" description="Periplasmic" evidence="1">
    <location>
        <begin position="303"/>
        <end position="305"/>
    </location>
</feature>
<feature type="transmembrane region" description="Helical" evidence="1">
    <location>
        <begin position="306"/>
        <end position="326"/>
    </location>
</feature>
<feature type="topological domain" description="Cytoplasmic" evidence="1">
    <location>
        <begin position="327"/>
        <end position="343"/>
    </location>
</feature>
<feature type="transmembrane region" description="Helical" evidence="1">
    <location>
        <begin position="344"/>
        <end position="364"/>
    </location>
</feature>
<feature type="topological domain" description="Periplasmic" evidence="1">
    <location>
        <begin position="365"/>
        <end position="366"/>
    </location>
</feature>
<feature type="transmembrane region" description="Helical" evidence="1">
    <location>
        <begin position="367"/>
        <end position="387"/>
    </location>
</feature>
<feature type="topological domain" description="Cytoplasmic" evidence="1">
    <location>
        <begin position="388"/>
        <end position="397"/>
    </location>
</feature>
<gene>
    <name evidence="1" type="primary">nepI</name>
    <name type="ordered locus">SPA3626</name>
</gene>
<evidence type="ECO:0000255" key="1">
    <source>
        <dbReference type="HAMAP-Rule" id="MF_01189"/>
    </source>
</evidence>
<sequence length="397" mass="41672">MNENIAEKFRADGVARPNWSAVFAVAFCVACLITVEFLPVSLLTPMAQDLGISEGVAGQSVTVTAFVAMFSSLFITQIIQATDRRYIVILFAVLLTASCLMVSFANSFTLLLLGRACLGLALGGFWAISASLTMRLVPARTVPKALSVIFGAVSIALVIAAPLGSFLGGIIGWRNVFNAAAVMGVLCVIWVVKSLPSLPGEPSHQKQNMFSLLQRPGVMAGMIAIFMSFAGQFAFFTYIRPVYMNLAGFDVDGLTLVLLSFGIASFVGTSFSSYVLKRSVKLALAGAPLLLALSALTLIVWGSDKTVAAAIAIIWGLAFALVPVGWSTWITRSLADQAEKAGSIQVAVIQLANTCGAAVGGYALDNFGLLSPLALSGGLMLLTALVVAAKVRITPMS</sequence>
<dbReference type="EMBL" id="CP000026">
    <property type="protein sequence ID" value="AAV79424.1"/>
    <property type="molecule type" value="Genomic_DNA"/>
</dbReference>
<dbReference type="RefSeq" id="WP_001004792.1">
    <property type="nucleotide sequence ID" value="NC_006511.1"/>
</dbReference>
<dbReference type="SMR" id="Q5PC58"/>
<dbReference type="KEGG" id="spt:SPA3626"/>
<dbReference type="HOGENOM" id="CLU_001265_61_1_6"/>
<dbReference type="Proteomes" id="UP000008185">
    <property type="component" value="Chromosome"/>
</dbReference>
<dbReference type="GO" id="GO:0005886">
    <property type="term" value="C:plasma membrane"/>
    <property type="evidence" value="ECO:0007669"/>
    <property type="project" value="UniProtKB-SubCell"/>
</dbReference>
<dbReference type="GO" id="GO:0015297">
    <property type="term" value="F:antiporter activity"/>
    <property type="evidence" value="ECO:0007669"/>
    <property type="project" value="UniProtKB-KW"/>
</dbReference>
<dbReference type="GO" id="GO:0015211">
    <property type="term" value="F:purine nucleoside transmembrane transporter activity"/>
    <property type="evidence" value="ECO:0007669"/>
    <property type="project" value="UniProtKB-UniRule"/>
</dbReference>
<dbReference type="CDD" id="cd17324">
    <property type="entry name" value="MFS_NepI_like"/>
    <property type="match status" value="1"/>
</dbReference>
<dbReference type="FunFam" id="1.20.1250.20:FF:000113">
    <property type="entry name" value="Purine ribonucleoside efflux pump NepI"/>
    <property type="match status" value="1"/>
</dbReference>
<dbReference type="Gene3D" id="1.20.1250.20">
    <property type="entry name" value="MFS general substrate transporter like domains"/>
    <property type="match status" value="1"/>
</dbReference>
<dbReference type="HAMAP" id="MF_01189">
    <property type="entry name" value="MFS_NepI"/>
    <property type="match status" value="1"/>
</dbReference>
<dbReference type="InterPro" id="IPR011701">
    <property type="entry name" value="MFS"/>
</dbReference>
<dbReference type="InterPro" id="IPR020846">
    <property type="entry name" value="MFS_dom"/>
</dbReference>
<dbReference type="InterPro" id="IPR050189">
    <property type="entry name" value="MFS_Efflux_Transporters"/>
</dbReference>
<dbReference type="InterPro" id="IPR023680">
    <property type="entry name" value="MFS_NepI"/>
</dbReference>
<dbReference type="InterPro" id="IPR036259">
    <property type="entry name" value="MFS_trans_sf"/>
</dbReference>
<dbReference type="NCBIfam" id="NF007578">
    <property type="entry name" value="PRK10213.1"/>
    <property type="match status" value="1"/>
</dbReference>
<dbReference type="PANTHER" id="PTHR43124">
    <property type="entry name" value="PURINE EFFLUX PUMP PBUE"/>
    <property type="match status" value="1"/>
</dbReference>
<dbReference type="PANTHER" id="PTHR43124:SF5">
    <property type="entry name" value="PURINE RIBONUCLEOSIDE EFFLUX PUMP NEPI"/>
    <property type="match status" value="1"/>
</dbReference>
<dbReference type="Pfam" id="PF07690">
    <property type="entry name" value="MFS_1"/>
    <property type="match status" value="1"/>
</dbReference>
<dbReference type="SUPFAM" id="SSF103473">
    <property type="entry name" value="MFS general substrate transporter"/>
    <property type="match status" value="1"/>
</dbReference>
<dbReference type="PROSITE" id="PS50850">
    <property type="entry name" value="MFS"/>
    <property type="match status" value="1"/>
</dbReference>
<name>NEPI_SALPA</name>
<reference key="1">
    <citation type="journal article" date="2004" name="Nat. Genet.">
        <title>Comparison of genome degradation in Paratyphi A and Typhi, human-restricted serovars of Salmonella enterica that cause typhoid.</title>
        <authorList>
            <person name="McClelland M."/>
            <person name="Sanderson K.E."/>
            <person name="Clifton S.W."/>
            <person name="Latreille P."/>
            <person name="Porwollik S."/>
            <person name="Sabo A."/>
            <person name="Meyer R."/>
            <person name="Bieri T."/>
            <person name="Ozersky P."/>
            <person name="McLellan M."/>
            <person name="Harkins C.R."/>
            <person name="Wang C."/>
            <person name="Nguyen C."/>
            <person name="Berghoff A."/>
            <person name="Elliott G."/>
            <person name="Kohlberg S."/>
            <person name="Strong C."/>
            <person name="Du F."/>
            <person name="Carter J."/>
            <person name="Kremizki C."/>
            <person name="Layman D."/>
            <person name="Leonard S."/>
            <person name="Sun H."/>
            <person name="Fulton L."/>
            <person name="Nash W."/>
            <person name="Miner T."/>
            <person name="Minx P."/>
            <person name="Delehaunty K."/>
            <person name="Fronick C."/>
            <person name="Magrini V."/>
            <person name="Nhan M."/>
            <person name="Warren W."/>
            <person name="Florea L."/>
            <person name="Spieth J."/>
            <person name="Wilson R.K."/>
        </authorList>
    </citation>
    <scope>NUCLEOTIDE SEQUENCE [LARGE SCALE GENOMIC DNA]</scope>
    <source>
        <strain>ATCC 9150 / SARB42</strain>
    </source>
</reference>
<proteinExistence type="inferred from homology"/>